<name>FARB_CALVO</name>
<comment type="subcellular location">
    <subcellularLocation>
        <location>Secreted</location>
    </subcellularLocation>
</comment>
<comment type="similarity">
    <text evidence="2">Belongs to the FARP (FMRFamide related peptide) family.</text>
</comment>
<protein>
    <recommendedName>
        <fullName>CalliFMRFamide-11</fullName>
    </recommendedName>
</protein>
<dbReference type="PIR" id="B44787">
    <property type="entry name" value="B44787"/>
</dbReference>
<dbReference type="GO" id="GO:0005576">
    <property type="term" value="C:extracellular region"/>
    <property type="evidence" value="ECO:0007669"/>
    <property type="project" value="UniProtKB-SubCell"/>
</dbReference>
<dbReference type="GO" id="GO:0007218">
    <property type="term" value="P:neuropeptide signaling pathway"/>
    <property type="evidence" value="ECO:0007669"/>
    <property type="project" value="UniProtKB-KW"/>
</dbReference>
<sequence>PDNFMRF</sequence>
<organism>
    <name type="scientific">Calliphora vomitoria</name>
    <name type="common">Blue bottle fly</name>
    <name type="synonym">Musca vomitoria</name>
    <dbReference type="NCBI Taxonomy" id="27454"/>
    <lineage>
        <taxon>Eukaryota</taxon>
        <taxon>Metazoa</taxon>
        <taxon>Ecdysozoa</taxon>
        <taxon>Arthropoda</taxon>
        <taxon>Hexapoda</taxon>
        <taxon>Insecta</taxon>
        <taxon>Pterygota</taxon>
        <taxon>Neoptera</taxon>
        <taxon>Endopterygota</taxon>
        <taxon>Diptera</taxon>
        <taxon>Brachycera</taxon>
        <taxon>Muscomorpha</taxon>
        <taxon>Oestroidea</taxon>
        <taxon>Calliphoridae</taxon>
        <taxon>Calliphorinae</taxon>
        <taxon>Calliphora</taxon>
    </lineage>
</organism>
<evidence type="ECO:0000269" key="1">
    <source>
    </source>
</evidence>
<evidence type="ECO:0000305" key="2"/>
<accession>P41866</accession>
<reference key="1">
    <citation type="journal article" date="1992" name="Proc. Natl. Acad. Sci. U.S.A.">
        <title>Isolation, structure, and activity of -Phe-Met-Arg-Phe-NH2 neuropeptides (designated calliFMRFamides) from the blowfly Calliphora vomitoria.</title>
        <authorList>
            <person name="Duve H."/>
            <person name="Johnsen A.H."/>
            <person name="Sewell J.C."/>
            <person name="Scott A.G."/>
            <person name="Orchard I."/>
            <person name="Rehfeld J.F."/>
            <person name="Thorpe A."/>
        </authorList>
    </citation>
    <scope>PROTEIN SEQUENCE</scope>
    <scope>AMIDATION AT PHE-7</scope>
    <source>
        <tissue>Thoracic ganglion</tissue>
    </source>
</reference>
<keyword id="KW-0027">Amidation</keyword>
<keyword id="KW-0903">Direct protein sequencing</keyword>
<keyword id="KW-0527">Neuropeptide</keyword>
<keyword id="KW-0964">Secreted</keyword>
<proteinExistence type="evidence at protein level"/>
<feature type="peptide" id="PRO_0000043673" description="CalliFMRFamide-11">
    <location>
        <begin position="1"/>
        <end position="7"/>
    </location>
</feature>
<feature type="modified residue" description="Phenylalanine amide" evidence="1">
    <location>
        <position position="7"/>
    </location>
</feature>